<organism>
    <name type="scientific">Haloarcula marismortui (strain ATCC 43049 / DSM 3752 / JCM 8966 / VKM B-1809)</name>
    <name type="common">Halobacterium marismortui</name>
    <dbReference type="NCBI Taxonomy" id="272569"/>
    <lineage>
        <taxon>Archaea</taxon>
        <taxon>Methanobacteriati</taxon>
        <taxon>Methanobacteriota</taxon>
        <taxon>Stenosarchaea group</taxon>
        <taxon>Halobacteria</taxon>
        <taxon>Halobacteriales</taxon>
        <taxon>Haloarculaceae</taxon>
        <taxon>Haloarcula</taxon>
    </lineage>
</organism>
<accession>Q5UXM9</accession>
<dbReference type="EMBL" id="AY596297">
    <property type="protein sequence ID" value="AAV47974.1"/>
    <property type="molecule type" value="Genomic_DNA"/>
</dbReference>
<dbReference type="RefSeq" id="WP_004964156.1">
    <property type="nucleotide sequence ID" value="NZ_CP039138.1"/>
</dbReference>
<dbReference type="SMR" id="Q5UXM9"/>
<dbReference type="STRING" id="272569.rrnAC3280"/>
<dbReference type="PaxDb" id="272569-rrnAC3280"/>
<dbReference type="EnsemblBacteria" id="AAV47974">
    <property type="protein sequence ID" value="AAV47974"/>
    <property type="gene ID" value="rrnAC3280"/>
</dbReference>
<dbReference type="GeneID" id="64823472"/>
<dbReference type="KEGG" id="hma:rrnAC3280"/>
<dbReference type="PATRIC" id="fig|272569.17.peg.3811"/>
<dbReference type="eggNOG" id="arCOG02810">
    <property type="taxonomic scope" value="Archaea"/>
</dbReference>
<dbReference type="HOGENOM" id="CLU_054785_5_1_2"/>
<dbReference type="Proteomes" id="UP000001169">
    <property type="component" value="Chromosome I"/>
</dbReference>
<dbReference type="GO" id="GO:0016020">
    <property type="term" value="C:membrane"/>
    <property type="evidence" value="ECO:0007669"/>
    <property type="project" value="UniProtKB-SubCell"/>
</dbReference>
<dbReference type="GO" id="GO:0005216">
    <property type="term" value="F:monoatomic ion channel activity"/>
    <property type="evidence" value="ECO:0007669"/>
    <property type="project" value="InterPro"/>
</dbReference>
<dbReference type="GO" id="GO:0009881">
    <property type="term" value="F:photoreceptor activity"/>
    <property type="evidence" value="ECO:0007669"/>
    <property type="project" value="UniProtKB-KW"/>
</dbReference>
<dbReference type="GO" id="GO:0007602">
    <property type="term" value="P:phototransduction"/>
    <property type="evidence" value="ECO:0007669"/>
    <property type="project" value="UniProtKB-KW"/>
</dbReference>
<dbReference type="CDD" id="cd15029">
    <property type="entry name" value="7tm_SRI_SRII"/>
    <property type="match status" value="1"/>
</dbReference>
<dbReference type="Gene3D" id="1.20.1070.10">
    <property type="entry name" value="Rhodopsin 7-helix transmembrane proteins"/>
    <property type="match status" value="1"/>
</dbReference>
<dbReference type="InterPro" id="IPR001425">
    <property type="entry name" value="Arc/bac/fun_rhodopsins"/>
</dbReference>
<dbReference type="InterPro" id="IPR018229">
    <property type="entry name" value="Rhodopsin_retinal_BS"/>
</dbReference>
<dbReference type="PANTHER" id="PTHR28286">
    <property type="match status" value="1"/>
</dbReference>
<dbReference type="PANTHER" id="PTHR28286:SF2">
    <property type="entry name" value="BACTERIORHODOPSIN _OPSIN, NOPA (EUROFUNG)"/>
    <property type="match status" value="1"/>
</dbReference>
<dbReference type="Pfam" id="PF01036">
    <property type="entry name" value="Bac_rhodopsin"/>
    <property type="match status" value="1"/>
</dbReference>
<dbReference type="PRINTS" id="PR00251">
    <property type="entry name" value="BACTRLOPSIN"/>
</dbReference>
<dbReference type="SMART" id="SM01021">
    <property type="entry name" value="Bac_rhodopsin"/>
    <property type="match status" value="1"/>
</dbReference>
<dbReference type="SUPFAM" id="SSF81321">
    <property type="entry name" value="Family A G protein-coupled receptor-like"/>
    <property type="match status" value="1"/>
</dbReference>
<dbReference type="PROSITE" id="PS00950">
    <property type="entry name" value="BACTERIAL_OPSIN_1"/>
    <property type="match status" value="1"/>
</dbReference>
<dbReference type="PROSITE" id="PS00327">
    <property type="entry name" value="BACTERIAL_OPSIN_RET"/>
    <property type="match status" value="1"/>
</dbReference>
<reference key="1">
    <citation type="journal article" date="2004" name="Genome Res.">
        <title>Genome sequence of Haloarcula marismortui: a halophilic archaeon from the Dead Sea.</title>
        <authorList>
            <person name="Baliga N.S."/>
            <person name="Bonneau R."/>
            <person name="Facciotti M.T."/>
            <person name="Pan M."/>
            <person name="Glusman G."/>
            <person name="Deutsch E.W."/>
            <person name="Shannon P."/>
            <person name="Chiu Y."/>
            <person name="Weng R.S."/>
            <person name="Gan R.R."/>
            <person name="Hung P."/>
            <person name="Date S.V."/>
            <person name="Marcotte E."/>
            <person name="Hood L."/>
            <person name="Ng W.V."/>
        </authorList>
    </citation>
    <scope>NUCLEOTIDE SEQUENCE [LARGE SCALE GENOMIC DNA]</scope>
    <source>
        <strain>ATCC 43049 / DSM 3752 / JCM 8966 / VKM B-1809</strain>
    </source>
</reference>
<reference key="2">
    <citation type="journal article" date="2010" name="J. Bacteriol.">
        <title>A novel six-rhodopsin system in a single archaeon.</title>
        <authorList>
            <person name="Fu H.Y."/>
            <person name="Lin Y.C."/>
            <person name="Chang Y.N."/>
            <person name="Tseng H."/>
            <person name="Huang C.C."/>
            <person name="Liu K.C."/>
            <person name="Huang C.S."/>
            <person name="Su C.W."/>
            <person name="Weng R.R."/>
            <person name="Lee Y.Y."/>
            <person name="Ng W.V."/>
            <person name="Yang C.S."/>
        </authorList>
    </citation>
    <scope>FUNCTION</scope>
    <scope>INDUCTION</scope>
    <scope>CHARACTERIZATION</scope>
    <scope>BIOPHYSICOCHEMICAL PROPERTIES</scope>
</reference>
<reference key="3">
    <citation type="journal article" date="2013" name="J. Photochem. Photobiol. B">
        <title>A transducer for microbial sensory rhodopsin that adopts GTG as a start codon is identified in Haloarcula marismortui.</title>
        <authorList>
            <person name="Fu H.Y."/>
            <person name="Lu Y.H."/>
            <person name="Yi H.P."/>
            <person name="Yang C.S."/>
        </authorList>
    </citation>
    <scope>FUNCTION</scope>
    <scope>INTERACTION WITH HTR1</scope>
    <scope>BIOPHYSICOCHEMICAL PROPERTIES</scope>
</reference>
<protein>
    <recommendedName>
        <fullName>Sensory rhodopsin I</fullName>
        <shortName>HmSRI</shortName>
    </recommendedName>
</protein>
<feature type="chain" id="PRO_0000428854" description="Sensory rhodopsin I">
    <location>
        <begin position="1"/>
        <end position="236"/>
    </location>
</feature>
<feature type="transmembrane region" description="Helical" evidence="2">
    <location>
        <begin position="6"/>
        <end position="26"/>
    </location>
</feature>
<feature type="transmembrane region" description="Helical" evidence="2">
    <location>
        <begin position="37"/>
        <end position="57"/>
    </location>
</feature>
<feature type="transmembrane region" description="Helical" evidence="2">
    <location>
        <begin position="74"/>
        <end position="94"/>
    </location>
</feature>
<feature type="transmembrane region" description="Helical" evidence="2">
    <location>
        <begin position="98"/>
        <end position="118"/>
    </location>
</feature>
<feature type="transmembrane region" description="Helical" evidence="2">
    <location>
        <begin position="126"/>
        <end position="146"/>
    </location>
</feature>
<feature type="transmembrane region" description="Helical" evidence="2">
    <location>
        <begin position="167"/>
        <end position="187"/>
    </location>
</feature>
<feature type="transmembrane region" description="Helical" evidence="2">
    <location>
        <begin position="192"/>
        <end position="212"/>
    </location>
</feature>
<feature type="site" description="Primary proton acceptor" evidence="1">
    <location>
        <position position="76"/>
    </location>
</feature>
<feature type="modified residue" description="N6-(retinylidene)lysine" evidence="1">
    <location>
        <position position="205"/>
    </location>
</feature>
<name>BACS1_HALMA</name>
<comment type="function">
    <text evidence="3 4">Photoattractant rhodopsin.</text>
</comment>
<comment type="biophysicochemical properties">
    <absorption>
        <max evidence="3 4">578 nm</max>
        <text>Lamda max is 538 nm when pH shifts from 5.0 to 8.0.</text>
    </absorption>
</comment>
<comment type="subunit">
    <text evidence="4">Interacts with Htr1.</text>
</comment>
<comment type="subcellular location">
    <subcellularLocation>
        <location evidence="5">Membrane</location>
        <topology evidence="5">Multi-pass membrane protein</topology>
    </subcellularLocation>
</comment>
<comment type="induction">
    <text evidence="3">Expressed constitutively throughout the growth phases, both in presence and absence of white light.</text>
</comment>
<comment type="PTM">
    <text evidence="1">The covalent binding of retinal to the apoprotein, bacterioopsin, generates bacteriorhodopsin.</text>
</comment>
<comment type="similarity">
    <text evidence="5">Belongs to the archaeal/bacterial/fungal opsin family.</text>
</comment>
<gene>
    <name type="primary">sop1</name>
    <name type="ordered locus">rrnAC3280</name>
</gene>
<evidence type="ECO:0000250" key="1"/>
<evidence type="ECO:0000255" key="2"/>
<evidence type="ECO:0000269" key="3">
    <source>
    </source>
</evidence>
<evidence type="ECO:0000269" key="4">
    <source>
    </source>
</evidence>
<evidence type="ECO:0000305" key="5"/>
<keyword id="KW-0157">Chromophore</keyword>
<keyword id="KW-0472">Membrane</keyword>
<keyword id="KW-0600">Photoreceptor protein</keyword>
<keyword id="KW-0675">Receptor</keyword>
<keyword id="KW-1185">Reference proteome</keyword>
<keyword id="KW-0681">Retinal protein</keyword>
<keyword id="KW-0716">Sensory transduction</keyword>
<keyword id="KW-0812">Transmembrane</keyword>
<keyword id="KW-1133">Transmembrane helix</keyword>
<sequence>MDAVSVVYGITAAGFAVGVAIVGFLYASLEGSDERPILAALALIPGVAGISYVAMVFGIGTVTIGETTLVGFRYLDWVVTTPLLVGFIGYTAGASRRAIFGVMAADALMILAGVGAVVAAGTLKWALFGVSAVFHISLFAYLYLIFPRSVPDDPQRIGLFSLLKNHVGLLWIAYPLVWLAGPEGLGFATYVGVSITYAFLDLLAKVPYVYFFYARRQVFATKLLRDSGDTTVTPAD</sequence>
<proteinExistence type="evidence at protein level"/>